<accession>P0CAF7</accession>
<sequence>MYFLVADHREHHVIPFLKTDFHHMHQNPIQKNQALLEIKQLFTGDYLICKSPSTILACIERKTYKDFAASLKDGRYQNRQKMLLLREQTKCQLYFFVEGPAFPNPQKKINHVAYASIITAMTHLMVRDHIFIIQTKNEAHSSQKLMQLFYAFSKEMVCVVPTSLTPTDEELCIKLWSSLSGISGVIGKIMANTCSVAHLVSGKLPSQNIDQLKTPSNRPFPKKVKRMLINISKGNKELEIKLLSGVPNIGKKLAAEILKDHALLFFLNQPVECLANIQIIQKTRTIKLGMKRAEAIHYFLNWCGSARVTVDSQNITEASRPIMQPATMQLATTQPLHKVSDEASENASHDASENASDKVSSPTGHQTISKYISKEISLNTAAK</sequence>
<organismHost>
    <name type="scientific">Ornithodoros</name>
    <name type="common">relapsing fever ticks</name>
    <dbReference type="NCBI Taxonomy" id="6937"/>
</organismHost>
<organismHost>
    <name type="scientific">Phacochoerus aethiopicus</name>
    <name type="common">Warthog</name>
    <dbReference type="NCBI Taxonomy" id="85517"/>
</organismHost>
<organismHost>
    <name type="scientific">Phacochoerus africanus</name>
    <name type="common">Warthog</name>
    <dbReference type="NCBI Taxonomy" id="41426"/>
</organismHost>
<organismHost>
    <name type="scientific">Potamochoerus larvatus</name>
    <name type="common">Bushpig</name>
    <dbReference type="NCBI Taxonomy" id="273792"/>
</organismHost>
<organismHost>
    <name type="scientific">Sus scrofa</name>
    <name type="common">Pig</name>
    <dbReference type="NCBI Taxonomy" id="9823"/>
</organismHost>
<gene>
    <name type="ordered locus">Mal-067</name>
</gene>
<comment type="function">
    <text evidence="1">Plays a role in the inhibition of type I interferon signaling pathway. Mechanistically, specifically interacts with 2',3'-cGAMP and cleaves it via its phosphodiesterase activity. In turn, prevents 2',3'-cGAMP interaction with host ER-resident STING1 leading to inhibition of downstream signaling pathway and type I interferon production.</text>
</comment>
<comment type="induction">
    <text evidence="1">Expressed in the late phase of the viral replicative cycle.</text>
</comment>
<comment type="similarity">
    <text evidence="3">Belongs to the asfivirus EP364R family.</text>
</comment>
<dbReference type="EC" id="3.1.4.-" evidence="1"/>
<dbReference type="EMBL" id="AY261361">
    <property type="status" value="NOT_ANNOTATED_CDS"/>
    <property type="molecule type" value="Genomic_DNA"/>
</dbReference>
<dbReference type="Proteomes" id="UP000000860">
    <property type="component" value="Segment"/>
</dbReference>
<dbReference type="GO" id="GO:0048476">
    <property type="term" value="C:Holliday junction resolvase complex"/>
    <property type="evidence" value="ECO:0007669"/>
    <property type="project" value="TreeGrafter"/>
</dbReference>
<dbReference type="GO" id="GO:0048257">
    <property type="term" value="F:3'-flap endonuclease activity"/>
    <property type="evidence" value="ECO:0007669"/>
    <property type="project" value="TreeGrafter"/>
</dbReference>
<dbReference type="GO" id="GO:0008821">
    <property type="term" value="F:crossover junction DNA endonuclease activity"/>
    <property type="evidence" value="ECO:0007669"/>
    <property type="project" value="InterPro"/>
</dbReference>
<dbReference type="GO" id="GO:0003677">
    <property type="term" value="F:DNA binding"/>
    <property type="evidence" value="ECO:0007669"/>
    <property type="project" value="InterPro"/>
</dbReference>
<dbReference type="GO" id="GO:0006308">
    <property type="term" value="P:DNA catabolic process"/>
    <property type="evidence" value="ECO:0007669"/>
    <property type="project" value="InterPro"/>
</dbReference>
<dbReference type="GO" id="GO:0000727">
    <property type="term" value="P:double-strand break repair via break-induced replication"/>
    <property type="evidence" value="ECO:0007669"/>
    <property type="project" value="TreeGrafter"/>
</dbReference>
<dbReference type="GO" id="GO:0052170">
    <property type="term" value="P:symbiont-mediated suppression of host innate immune response"/>
    <property type="evidence" value="ECO:0007669"/>
    <property type="project" value="UniProtKB-KW"/>
</dbReference>
<dbReference type="GO" id="GO:0039502">
    <property type="term" value="P:symbiont-mediated suppression of host type I interferon-mediated signaling pathway"/>
    <property type="evidence" value="ECO:0007669"/>
    <property type="project" value="UniProtKB-KW"/>
</dbReference>
<dbReference type="CDD" id="cd22367">
    <property type="entry name" value="XPF_ERCC4_MUS81-like"/>
    <property type="match status" value="1"/>
</dbReference>
<dbReference type="Gene3D" id="3.40.50.10130">
    <property type="match status" value="1"/>
</dbReference>
<dbReference type="InterPro" id="IPR006166">
    <property type="entry name" value="ERCC4_domain"/>
</dbReference>
<dbReference type="InterPro" id="IPR033309">
    <property type="entry name" value="Mus81"/>
</dbReference>
<dbReference type="InterPro" id="IPR011335">
    <property type="entry name" value="Restrct_endonuc-II-like"/>
</dbReference>
<dbReference type="PANTHER" id="PTHR13451">
    <property type="entry name" value="CLASS II CROSSOVER JUNCTION ENDONUCLEASE MUS81"/>
    <property type="match status" value="1"/>
</dbReference>
<dbReference type="PANTHER" id="PTHR13451:SF0">
    <property type="entry name" value="CROSSOVER JUNCTION ENDONUCLEASE MUS81"/>
    <property type="match status" value="1"/>
</dbReference>
<dbReference type="Pfam" id="PF02732">
    <property type="entry name" value="ERCC4"/>
    <property type="match status" value="1"/>
</dbReference>
<dbReference type="SUPFAM" id="SSF52980">
    <property type="entry name" value="Restriction endonuclease-like"/>
    <property type="match status" value="1"/>
</dbReference>
<keyword id="KW-0945">Host-virus interaction</keyword>
<keyword id="KW-0378">Hydrolase</keyword>
<keyword id="KW-1090">Inhibition of host innate immune response by virus</keyword>
<keyword id="KW-1114">Inhibition of host interferon signaling pathway by virus</keyword>
<keyword id="KW-0922">Interferon antiviral system evasion</keyword>
<keyword id="KW-0426">Late protein</keyword>
<keyword id="KW-0899">Viral immunoevasion</keyword>
<feature type="chain" id="PRO_0000373668" description="ERCC4 domain-containing protein EP364R">
    <location>
        <begin position="1"/>
        <end position="383"/>
    </location>
</feature>
<feature type="domain" description="ERCC4">
    <location>
        <begin position="3"/>
        <end position="101"/>
    </location>
</feature>
<feature type="region of interest" description="Disordered" evidence="2">
    <location>
        <begin position="336"/>
        <end position="367"/>
    </location>
</feature>
<feature type="compositionally biased region" description="Basic and acidic residues" evidence="2">
    <location>
        <begin position="347"/>
        <end position="356"/>
    </location>
</feature>
<feature type="compositionally biased region" description="Polar residues" evidence="2">
    <location>
        <begin position="357"/>
        <end position="367"/>
    </location>
</feature>
<evidence type="ECO:0000250" key="1">
    <source>
        <dbReference type="UniProtKB" id="Q65151"/>
    </source>
</evidence>
<evidence type="ECO:0000256" key="2">
    <source>
        <dbReference type="SAM" id="MobiDB-lite"/>
    </source>
</evidence>
<evidence type="ECO:0000305" key="3"/>
<reference key="1">
    <citation type="submission" date="2003-03" db="EMBL/GenBank/DDBJ databases">
        <title>African swine fever virus genomes.</title>
        <authorList>
            <person name="Kutish G.F."/>
            <person name="Rock D.L."/>
        </authorList>
    </citation>
    <scope>NUCLEOTIDE SEQUENCE [LARGE SCALE GENOMIC DNA]</scope>
</reference>
<name>VF364_ASFM2</name>
<proteinExistence type="inferred from homology"/>
<organism>
    <name type="scientific">African swine fever virus (isolate Tick/Malawi/Lil 20-1/1983)</name>
    <name type="common">ASFV</name>
    <dbReference type="NCBI Taxonomy" id="10500"/>
    <lineage>
        <taxon>Viruses</taxon>
        <taxon>Varidnaviria</taxon>
        <taxon>Bamfordvirae</taxon>
        <taxon>Nucleocytoviricota</taxon>
        <taxon>Pokkesviricetes</taxon>
        <taxon>Asfuvirales</taxon>
        <taxon>Asfarviridae</taxon>
        <taxon>Asfivirus</taxon>
        <taxon>African swine fever virus</taxon>
    </lineage>
</organism>
<protein>
    <recommendedName>
        <fullName>ERCC4 domain-containing protein EP364R</fullName>
        <shortName>pEP364R</shortName>
        <ecNumber evidence="1">3.1.4.-</ecNumber>
    </recommendedName>
</protein>